<accession>Q2UJ80</accession>
<evidence type="ECO:0000250" key="1"/>
<evidence type="ECO:0000256" key="2">
    <source>
        <dbReference type="SAM" id="MobiDB-lite"/>
    </source>
</evidence>
<evidence type="ECO:0000305" key="3"/>
<protein>
    <recommendedName>
        <fullName>Histone H2A.Z</fullName>
    </recommendedName>
</protein>
<sequence length="138" mass="14834">MPGGKGKSIGGKAGSKDSAGKAQKSHSAKAGLQFPCGRVKRFLKNNTQNKMRVGAKAAVYVTAVLEYLTAEVLELAGNAAKDLKVKRITPRHLQLAIRGDEELDTLIRATIAFGGVLPRINRALLLKVEQKKKNKTEA</sequence>
<proteinExistence type="inferred from homology"/>
<feature type="chain" id="PRO_0000297719" description="Histone H2A.Z">
    <location>
        <begin position="1"/>
        <end position="138"/>
    </location>
</feature>
<feature type="region of interest" description="Disordered" evidence="2">
    <location>
        <begin position="1"/>
        <end position="32"/>
    </location>
</feature>
<feature type="compositionally biased region" description="Gly residues" evidence="2">
    <location>
        <begin position="1"/>
        <end position="13"/>
    </location>
</feature>
<feature type="modified residue" description="N6-acetyllysine" evidence="1">
    <location>
        <position position="5"/>
    </location>
</feature>
<feature type="modified residue" description="N6-acetyllysine" evidence="1">
    <location>
        <position position="12"/>
    </location>
</feature>
<reference key="1">
    <citation type="journal article" date="2005" name="Nature">
        <title>Genome sequencing and analysis of Aspergillus oryzae.</title>
        <authorList>
            <person name="Machida M."/>
            <person name="Asai K."/>
            <person name="Sano M."/>
            <person name="Tanaka T."/>
            <person name="Kumagai T."/>
            <person name="Terai G."/>
            <person name="Kusumoto K."/>
            <person name="Arima T."/>
            <person name="Akita O."/>
            <person name="Kashiwagi Y."/>
            <person name="Abe K."/>
            <person name="Gomi K."/>
            <person name="Horiuchi H."/>
            <person name="Kitamoto K."/>
            <person name="Kobayashi T."/>
            <person name="Takeuchi M."/>
            <person name="Denning D.W."/>
            <person name="Galagan J.E."/>
            <person name="Nierman W.C."/>
            <person name="Yu J."/>
            <person name="Archer D.B."/>
            <person name="Bennett J.W."/>
            <person name="Bhatnagar D."/>
            <person name="Cleveland T.E."/>
            <person name="Fedorova N.D."/>
            <person name="Gotoh O."/>
            <person name="Horikawa H."/>
            <person name="Hosoyama A."/>
            <person name="Ichinomiya M."/>
            <person name="Igarashi R."/>
            <person name="Iwashita K."/>
            <person name="Juvvadi P.R."/>
            <person name="Kato M."/>
            <person name="Kato Y."/>
            <person name="Kin T."/>
            <person name="Kokubun A."/>
            <person name="Maeda H."/>
            <person name="Maeyama N."/>
            <person name="Maruyama J."/>
            <person name="Nagasaki H."/>
            <person name="Nakajima T."/>
            <person name="Oda K."/>
            <person name="Okada K."/>
            <person name="Paulsen I."/>
            <person name="Sakamoto K."/>
            <person name="Sawano T."/>
            <person name="Takahashi M."/>
            <person name="Takase K."/>
            <person name="Terabayashi Y."/>
            <person name="Wortman J.R."/>
            <person name="Yamada O."/>
            <person name="Yamagata Y."/>
            <person name="Anazawa H."/>
            <person name="Hata Y."/>
            <person name="Koide Y."/>
            <person name="Komori T."/>
            <person name="Koyama Y."/>
            <person name="Minetoki T."/>
            <person name="Suharnan S."/>
            <person name="Tanaka A."/>
            <person name="Isono K."/>
            <person name="Kuhara S."/>
            <person name="Ogasawara N."/>
            <person name="Kikuchi H."/>
        </authorList>
    </citation>
    <scope>NUCLEOTIDE SEQUENCE [LARGE SCALE GENOMIC DNA]</scope>
    <source>
        <strain>ATCC 42149 / RIB 40</strain>
    </source>
</reference>
<organism>
    <name type="scientific">Aspergillus oryzae (strain ATCC 42149 / RIB 40)</name>
    <name type="common">Yellow koji mold</name>
    <dbReference type="NCBI Taxonomy" id="510516"/>
    <lineage>
        <taxon>Eukaryota</taxon>
        <taxon>Fungi</taxon>
        <taxon>Dikarya</taxon>
        <taxon>Ascomycota</taxon>
        <taxon>Pezizomycotina</taxon>
        <taxon>Eurotiomycetes</taxon>
        <taxon>Eurotiomycetidae</taxon>
        <taxon>Eurotiales</taxon>
        <taxon>Aspergillaceae</taxon>
        <taxon>Aspergillus</taxon>
        <taxon>Aspergillus subgen. Circumdati</taxon>
    </lineage>
</organism>
<comment type="function">
    <text evidence="1">Variant histone H2A which can replace H2A in some nucleosomes. Nucleosomes wrap and compact DNA into chromatin, limiting DNA accessibility to the cellular machineries which require DNA as a template. Histones thereby play a central role in transcription regulation, DNA repair, DNA replication and chromosomal stability. DNA accessibility is regulated via a complex set of post-translational modifications of histones, also called histone code, and nucleosome remodeling. This variant is enriched at promoters, it may keep them in a repressed state until the appropriate activation signal is received. Near telomeres, it may counteract gene silencing caused by the spread of heterochromatin proteins. Required for the RNA polymerase II and spt15/TBP recruitment to the target genes. Involved in chromosome stability (By similarity).</text>
</comment>
<comment type="subunit">
    <text evidence="1">The nucleosome is a histone octamer containing two molecules each of H2A, H2B, H3 and H4 assembled in one H3-H4 heterotetramer and two H2A-H2B heterodimers. The octamer wraps approximately 147 bp of DNA. H2A or its variant H2A.Z forms a heterodimer with H2B. H2A.Z associates with the vps72/swc2 subunit of the SWR1 chromatin remodeling complex. Also interacts with rbp1/DNA-directed RNA polymerase II largest subunit (By similarity).</text>
</comment>
<comment type="subcellular location">
    <subcellularLocation>
        <location evidence="1">Nucleus</location>
    </subcellularLocation>
    <subcellularLocation>
        <location evidence="1">Chromosome</location>
    </subcellularLocation>
</comment>
<comment type="PTM">
    <text evidence="1">Acetylated once deposited into chromatin.</text>
</comment>
<comment type="similarity">
    <text evidence="3">Belongs to the histone H2A family.</text>
</comment>
<dbReference type="EMBL" id="BA000050">
    <property type="protein sequence ID" value="BAE58385.1"/>
    <property type="molecule type" value="Genomic_DNA"/>
</dbReference>
<dbReference type="RefSeq" id="XP_001820387.1">
    <property type="nucleotide sequence ID" value="XM_001820335.2"/>
</dbReference>
<dbReference type="SMR" id="Q2UJ80"/>
<dbReference type="STRING" id="510516.Q2UJ80"/>
<dbReference type="EnsemblFungi" id="BAE58385">
    <property type="protein sequence ID" value="BAE58385"/>
    <property type="gene ID" value="AO090003001324"/>
</dbReference>
<dbReference type="GeneID" id="5992370"/>
<dbReference type="KEGG" id="aor:AO090003001324"/>
<dbReference type="VEuPathDB" id="FungiDB:AO090003001324"/>
<dbReference type="HOGENOM" id="CLU_062828_2_1_1"/>
<dbReference type="OMA" id="MNKKGAP"/>
<dbReference type="OrthoDB" id="101001at5052"/>
<dbReference type="Proteomes" id="UP000006564">
    <property type="component" value="Chromosome 2"/>
</dbReference>
<dbReference type="GO" id="GO:0000791">
    <property type="term" value="C:euchromatin"/>
    <property type="evidence" value="ECO:0007669"/>
    <property type="project" value="EnsemblFungi"/>
</dbReference>
<dbReference type="GO" id="GO:0000786">
    <property type="term" value="C:nucleosome"/>
    <property type="evidence" value="ECO:0007669"/>
    <property type="project" value="UniProtKB-KW"/>
</dbReference>
<dbReference type="GO" id="GO:0005634">
    <property type="term" value="C:nucleus"/>
    <property type="evidence" value="ECO:0007669"/>
    <property type="project" value="UniProtKB-SubCell"/>
</dbReference>
<dbReference type="GO" id="GO:0031490">
    <property type="term" value="F:chromatin DNA binding"/>
    <property type="evidence" value="ECO:0007669"/>
    <property type="project" value="EnsemblFungi"/>
</dbReference>
<dbReference type="GO" id="GO:0042802">
    <property type="term" value="F:identical protein binding"/>
    <property type="evidence" value="ECO:0007669"/>
    <property type="project" value="EnsemblFungi"/>
</dbReference>
<dbReference type="GO" id="GO:0046982">
    <property type="term" value="F:protein heterodimerization activity"/>
    <property type="evidence" value="ECO:0007669"/>
    <property type="project" value="InterPro"/>
</dbReference>
<dbReference type="GO" id="GO:0000978">
    <property type="term" value="F:RNA polymerase II cis-regulatory region sequence-specific DNA binding"/>
    <property type="evidence" value="ECO:0007669"/>
    <property type="project" value="EnsemblFungi"/>
</dbReference>
<dbReference type="GO" id="GO:0030527">
    <property type="term" value="F:structural constituent of chromatin"/>
    <property type="evidence" value="ECO:0007669"/>
    <property type="project" value="InterPro"/>
</dbReference>
<dbReference type="GO" id="GO:0140898">
    <property type="term" value="P:CENP-A eviction from euchromatin"/>
    <property type="evidence" value="ECO:0007669"/>
    <property type="project" value="EnsemblFungi"/>
</dbReference>
<dbReference type="GO" id="GO:0070481">
    <property type="term" value="P:nuclear-transcribed mRNA catabolic process, non-stop decay"/>
    <property type="evidence" value="ECO:0007669"/>
    <property type="project" value="EnsemblFungi"/>
</dbReference>
<dbReference type="GO" id="GO:0006357">
    <property type="term" value="P:regulation of transcription by RNA polymerase II"/>
    <property type="evidence" value="ECO:0007669"/>
    <property type="project" value="EnsemblFungi"/>
</dbReference>
<dbReference type="GO" id="GO:0030466">
    <property type="term" value="P:silent mating-type cassette heterochromatin formation"/>
    <property type="evidence" value="ECO:0007669"/>
    <property type="project" value="EnsemblFungi"/>
</dbReference>
<dbReference type="GO" id="GO:0006368">
    <property type="term" value="P:transcription elongation by RNA polymerase II"/>
    <property type="evidence" value="ECO:0007669"/>
    <property type="project" value="EnsemblFungi"/>
</dbReference>
<dbReference type="CDD" id="cd00074">
    <property type="entry name" value="HFD_H2A"/>
    <property type="match status" value="1"/>
</dbReference>
<dbReference type="FunFam" id="1.10.20.10:FF:000021">
    <property type="entry name" value="Histone H2A"/>
    <property type="match status" value="1"/>
</dbReference>
<dbReference type="Gene3D" id="1.10.20.10">
    <property type="entry name" value="Histone, subunit A"/>
    <property type="match status" value="1"/>
</dbReference>
<dbReference type="InterPro" id="IPR009072">
    <property type="entry name" value="Histone-fold"/>
</dbReference>
<dbReference type="InterPro" id="IPR002119">
    <property type="entry name" value="Histone_H2A"/>
</dbReference>
<dbReference type="InterPro" id="IPR007125">
    <property type="entry name" value="Histone_H2A/H2B/H3"/>
</dbReference>
<dbReference type="InterPro" id="IPR032454">
    <property type="entry name" value="Histone_H2A_C"/>
</dbReference>
<dbReference type="PANTHER" id="PTHR23430">
    <property type="entry name" value="HISTONE H2A"/>
    <property type="match status" value="1"/>
</dbReference>
<dbReference type="Pfam" id="PF00125">
    <property type="entry name" value="Histone"/>
    <property type="match status" value="1"/>
</dbReference>
<dbReference type="Pfam" id="PF16211">
    <property type="entry name" value="Histone_H2A_C"/>
    <property type="match status" value="1"/>
</dbReference>
<dbReference type="PRINTS" id="PR00620">
    <property type="entry name" value="HISTONEH2A"/>
</dbReference>
<dbReference type="SMART" id="SM00414">
    <property type="entry name" value="H2A"/>
    <property type="match status" value="1"/>
</dbReference>
<dbReference type="SUPFAM" id="SSF47113">
    <property type="entry name" value="Histone-fold"/>
    <property type="match status" value="1"/>
</dbReference>
<keyword id="KW-0007">Acetylation</keyword>
<keyword id="KW-0158">Chromosome</keyword>
<keyword id="KW-0238">DNA-binding</keyword>
<keyword id="KW-0544">Nucleosome core</keyword>
<keyword id="KW-0539">Nucleus</keyword>
<keyword id="KW-1185">Reference proteome</keyword>
<name>H2AZ_ASPOR</name>
<gene>
    <name type="primary">HTZ1</name>
    <name type="ORF">AO090003001324</name>
</gene>